<evidence type="ECO:0000255" key="1">
    <source>
        <dbReference type="HAMAP-Rule" id="MF_01708"/>
    </source>
</evidence>
<feature type="chain" id="PRO_0000092438" description="Lipoprotein-releasing system ATP-binding protein LolD">
    <location>
        <begin position="1"/>
        <end position="226"/>
    </location>
</feature>
<feature type="domain" description="ABC transporter" evidence="1">
    <location>
        <begin position="5"/>
        <end position="226"/>
    </location>
</feature>
<feature type="binding site" evidence="1">
    <location>
        <begin position="41"/>
        <end position="48"/>
    </location>
    <ligand>
        <name>ATP</name>
        <dbReference type="ChEBI" id="CHEBI:30616"/>
    </ligand>
</feature>
<gene>
    <name evidence="1" type="primary">lolD</name>
    <name type="ordered locus">HD_0860</name>
</gene>
<organism>
    <name type="scientific">Haemophilus ducreyi (strain 35000HP / ATCC 700724)</name>
    <dbReference type="NCBI Taxonomy" id="233412"/>
    <lineage>
        <taxon>Bacteria</taxon>
        <taxon>Pseudomonadati</taxon>
        <taxon>Pseudomonadota</taxon>
        <taxon>Gammaproteobacteria</taxon>
        <taxon>Pasteurellales</taxon>
        <taxon>Pasteurellaceae</taxon>
        <taxon>Haemophilus</taxon>
    </lineage>
</organism>
<proteinExistence type="inferred from homology"/>
<sequence>MTELLRCEKISKFYEEGSQSVQVLNDVSFTINTGGLVAIVGSSGSGKSTLLHILGGLDKPTTGEVWINRQSLQQLSANQLAELRNQQLGFVYQFHHLMADFTALENVMMPMLIGKQNKREAADLAEKMLQAVGLQHRICHRPAALSGGERQRVAIARALVNKPALVLADEPTGNLDQKTTESIFELIKQLNIEQNIAFLLVTHDLKLADKLTRRLIMADGVLREAS</sequence>
<dbReference type="EC" id="7.6.2.-" evidence="1"/>
<dbReference type="EMBL" id="AE017143">
    <property type="protein sequence ID" value="AAP95749.1"/>
    <property type="molecule type" value="Genomic_DNA"/>
</dbReference>
<dbReference type="RefSeq" id="WP_010944799.1">
    <property type="nucleotide sequence ID" value="NC_002940.2"/>
</dbReference>
<dbReference type="SMR" id="Q7VMV4"/>
<dbReference type="STRING" id="233412.HD_0860"/>
<dbReference type="KEGG" id="hdu:HD_0860"/>
<dbReference type="eggNOG" id="COG1136">
    <property type="taxonomic scope" value="Bacteria"/>
</dbReference>
<dbReference type="HOGENOM" id="CLU_000604_1_22_6"/>
<dbReference type="OrthoDB" id="9801477at2"/>
<dbReference type="Proteomes" id="UP000001022">
    <property type="component" value="Chromosome"/>
</dbReference>
<dbReference type="GO" id="GO:0005886">
    <property type="term" value="C:plasma membrane"/>
    <property type="evidence" value="ECO:0007669"/>
    <property type="project" value="UniProtKB-SubCell"/>
</dbReference>
<dbReference type="GO" id="GO:0005524">
    <property type="term" value="F:ATP binding"/>
    <property type="evidence" value="ECO:0007669"/>
    <property type="project" value="UniProtKB-KW"/>
</dbReference>
<dbReference type="GO" id="GO:0016887">
    <property type="term" value="F:ATP hydrolysis activity"/>
    <property type="evidence" value="ECO:0007669"/>
    <property type="project" value="InterPro"/>
</dbReference>
<dbReference type="GO" id="GO:0022857">
    <property type="term" value="F:transmembrane transporter activity"/>
    <property type="evidence" value="ECO:0007669"/>
    <property type="project" value="TreeGrafter"/>
</dbReference>
<dbReference type="GO" id="GO:0044874">
    <property type="term" value="P:lipoprotein localization to outer membrane"/>
    <property type="evidence" value="ECO:0007669"/>
    <property type="project" value="TreeGrafter"/>
</dbReference>
<dbReference type="GO" id="GO:0089705">
    <property type="term" value="P:protein localization to outer membrane"/>
    <property type="evidence" value="ECO:0007669"/>
    <property type="project" value="TreeGrafter"/>
</dbReference>
<dbReference type="CDD" id="cd03255">
    <property type="entry name" value="ABC_MJ0796_LolCDE_FtsE"/>
    <property type="match status" value="1"/>
</dbReference>
<dbReference type="FunFam" id="3.40.50.300:FF:000230">
    <property type="entry name" value="Lipoprotein-releasing system ATP-binding protein LolD"/>
    <property type="match status" value="1"/>
</dbReference>
<dbReference type="Gene3D" id="3.40.50.300">
    <property type="entry name" value="P-loop containing nucleotide triphosphate hydrolases"/>
    <property type="match status" value="1"/>
</dbReference>
<dbReference type="InterPro" id="IPR003593">
    <property type="entry name" value="AAA+_ATPase"/>
</dbReference>
<dbReference type="InterPro" id="IPR003439">
    <property type="entry name" value="ABC_transporter-like_ATP-bd"/>
</dbReference>
<dbReference type="InterPro" id="IPR017871">
    <property type="entry name" value="ABC_transporter-like_CS"/>
</dbReference>
<dbReference type="InterPro" id="IPR015854">
    <property type="entry name" value="ABC_transpr_LolD-like"/>
</dbReference>
<dbReference type="InterPro" id="IPR011924">
    <property type="entry name" value="LolD_lipo_ATP-bd"/>
</dbReference>
<dbReference type="InterPro" id="IPR017911">
    <property type="entry name" value="MacB-like_ATP-bd"/>
</dbReference>
<dbReference type="InterPro" id="IPR027417">
    <property type="entry name" value="P-loop_NTPase"/>
</dbReference>
<dbReference type="NCBIfam" id="TIGR02211">
    <property type="entry name" value="LolD_lipo_ex"/>
    <property type="match status" value="1"/>
</dbReference>
<dbReference type="PANTHER" id="PTHR24220">
    <property type="entry name" value="IMPORT ATP-BINDING PROTEIN"/>
    <property type="match status" value="1"/>
</dbReference>
<dbReference type="PANTHER" id="PTHR24220:SF689">
    <property type="entry name" value="LIPOPROTEIN-RELEASING SYSTEM ATP-BINDING PROTEIN LOLD"/>
    <property type="match status" value="1"/>
</dbReference>
<dbReference type="Pfam" id="PF00005">
    <property type="entry name" value="ABC_tran"/>
    <property type="match status" value="1"/>
</dbReference>
<dbReference type="SMART" id="SM00382">
    <property type="entry name" value="AAA"/>
    <property type="match status" value="1"/>
</dbReference>
<dbReference type="SUPFAM" id="SSF52540">
    <property type="entry name" value="P-loop containing nucleoside triphosphate hydrolases"/>
    <property type="match status" value="1"/>
</dbReference>
<dbReference type="PROSITE" id="PS00211">
    <property type="entry name" value="ABC_TRANSPORTER_1"/>
    <property type="match status" value="1"/>
</dbReference>
<dbReference type="PROSITE" id="PS50893">
    <property type="entry name" value="ABC_TRANSPORTER_2"/>
    <property type="match status" value="1"/>
</dbReference>
<dbReference type="PROSITE" id="PS51244">
    <property type="entry name" value="LOLD"/>
    <property type="match status" value="1"/>
</dbReference>
<comment type="function">
    <text evidence="1">Part of the ABC transporter complex LolCDE involved in the translocation of mature outer membrane-directed lipoproteins, from the inner membrane to the periplasmic chaperone, LolA. Responsible for the formation of the LolA-lipoprotein complex in an ATP-dependent manner.</text>
</comment>
<comment type="subunit">
    <text evidence="1">The complex is composed of two ATP-binding proteins (LolD) and two transmembrane proteins (LolC and LolE).</text>
</comment>
<comment type="subcellular location">
    <subcellularLocation>
        <location evidence="1">Cell inner membrane</location>
        <topology evidence="1">Peripheral membrane protein</topology>
    </subcellularLocation>
</comment>
<comment type="similarity">
    <text evidence="1">Belongs to the ABC transporter superfamily. Lipoprotein translocase (TC 3.A.1.125) family.</text>
</comment>
<name>LOLD_HAEDU</name>
<reference key="1">
    <citation type="submission" date="2003-06" db="EMBL/GenBank/DDBJ databases">
        <title>The complete genome sequence of Haemophilus ducreyi.</title>
        <authorList>
            <person name="Munson R.S. Jr."/>
            <person name="Ray W.C."/>
            <person name="Mahairas G."/>
            <person name="Sabo P."/>
            <person name="Mungur R."/>
            <person name="Johnson L."/>
            <person name="Nguyen D."/>
            <person name="Wang J."/>
            <person name="Forst C."/>
            <person name="Hood L."/>
        </authorList>
    </citation>
    <scope>NUCLEOTIDE SEQUENCE [LARGE SCALE GENOMIC DNA]</scope>
    <source>
        <strain>35000HP / ATCC 700724</strain>
    </source>
</reference>
<protein>
    <recommendedName>
        <fullName evidence="1">Lipoprotein-releasing system ATP-binding protein LolD</fullName>
        <ecNumber evidence="1">7.6.2.-</ecNumber>
    </recommendedName>
</protein>
<accession>Q7VMV4</accession>
<keyword id="KW-0067">ATP-binding</keyword>
<keyword id="KW-0997">Cell inner membrane</keyword>
<keyword id="KW-1003">Cell membrane</keyword>
<keyword id="KW-0472">Membrane</keyword>
<keyword id="KW-0547">Nucleotide-binding</keyword>
<keyword id="KW-1185">Reference proteome</keyword>
<keyword id="KW-1278">Translocase</keyword>
<keyword id="KW-0813">Transport</keyword>